<dbReference type="EMBL" id="Y15195">
    <property type="protein sequence ID" value="CAA75494.1"/>
    <property type="status" value="ALT_SEQ"/>
    <property type="molecule type" value="mRNA"/>
</dbReference>
<dbReference type="EMBL" id="AF072756">
    <property type="protein sequence ID" value="AAC79433.1"/>
    <property type="molecule type" value="mRNA"/>
</dbReference>
<dbReference type="EMBL" id="FO393402">
    <property type="status" value="NOT_ANNOTATED_CDS"/>
    <property type="molecule type" value="Genomic_DNA"/>
</dbReference>
<dbReference type="EMBL" id="BC126250">
    <property type="protein sequence ID" value="AAI26251.1"/>
    <property type="molecule type" value="mRNA"/>
</dbReference>
<dbReference type="EMBL" id="BC126252">
    <property type="protein sequence ID" value="AAI26253.1"/>
    <property type="molecule type" value="mRNA"/>
</dbReference>
<dbReference type="CCDS" id="CCDS14329.1">
    <molecule id="Q5JQC9-1"/>
</dbReference>
<dbReference type="CCDS" id="CCDS14330.1">
    <molecule id="Q5JQC9-2"/>
</dbReference>
<dbReference type="PIR" id="JC5986">
    <property type="entry name" value="JC5986"/>
</dbReference>
<dbReference type="RefSeq" id="NP_003877.2">
    <molecule id="Q5JQC9-1"/>
    <property type="nucleotide sequence ID" value="NM_003886.2"/>
</dbReference>
<dbReference type="RefSeq" id="NP_647450.1">
    <molecule id="Q5JQC9-2"/>
    <property type="nucleotide sequence ID" value="NM_139289.2"/>
</dbReference>
<dbReference type="SMR" id="Q5JQC9"/>
<dbReference type="BioGRID" id="114377">
    <property type="interactions" value="9"/>
</dbReference>
<dbReference type="FunCoup" id="Q5JQC9">
    <property type="interactions" value="9"/>
</dbReference>
<dbReference type="IntAct" id="Q5JQC9">
    <property type="interactions" value="1"/>
</dbReference>
<dbReference type="STRING" id="9606.ENSP00000351327"/>
<dbReference type="GlyGen" id="Q5JQC9">
    <property type="glycosylation" value="2 sites, 1 O-linked glycan (2 sites)"/>
</dbReference>
<dbReference type="iPTMnet" id="Q5JQC9"/>
<dbReference type="PhosphoSitePlus" id="Q5JQC9"/>
<dbReference type="BioMuta" id="AKAP4"/>
<dbReference type="DMDM" id="74741729"/>
<dbReference type="jPOST" id="Q5JQC9"/>
<dbReference type="MassIVE" id="Q5JQC9"/>
<dbReference type="PaxDb" id="9606-ENSP00000351327"/>
<dbReference type="PeptideAtlas" id="Q5JQC9"/>
<dbReference type="ProteomicsDB" id="63039">
    <molecule id="Q5JQC9-1"/>
</dbReference>
<dbReference type="ProteomicsDB" id="63040">
    <molecule id="Q5JQC9-2"/>
</dbReference>
<dbReference type="TopDownProteomics" id="Q5JQC9-2">
    <molecule id="Q5JQC9-2"/>
</dbReference>
<dbReference type="Antibodypedia" id="470">
    <property type="antibodies" value="152 antibodies from 29 providers"/>
</dbReference>
<dbReference type="DNASU" id="8852"/>
<dbReference type="Ensembl" id="ENST00000358526.7">
    <molecule id="Q5JQC9-1"/>
    <property type="protein sequence ID" value="ENSP00000351327.2"/>
    <property type="gene ID" value="ENSG00000147081.15"/>
</dbReference>
<dbReference type="Ensembl" id="ENST00000376064.7">
    <molecule id="Q5JQC9-2"/>
    <property type="protein sequence ID" value="ENSP00000365232.3"/>
    <property type="gene ID" value="ENSG00000147081.15"/>
</dbReference>
<dbReference type="GeneID" id="8852"/>
<dbReference type="KEGG" id="hsa:8852"/>
<dbReference type="MANE-Select" id="ENST00000358526.7">
    <property type="protein sequence ID" value="ENSP00000351327.2"/>
    <property type="RefSeq nucleotide sequence ID" value="NM_003886.3"/>
    <property type="RefSeq protein sequence ID" value="NP_003877.2"/>
</dbReference>
<dbReference type="UCSC" id="uc004dou.2">
    <molecule id="Q5JQC9-1"/>
    <property type="organism name" value="human"/>
</dbReference>
<dbReference type="AGR" id="HGNC:374"/>
<dbReference type="CTD" id="8852"/>
<dbReference type="DisGeNET" id="8852"/>
<dbReference type="GeneCards" id="AKAP4"/>
<dbReference type="HGNC" id="HGNC:374">
    <property type="gene designation" value="AKAP4"/>
</dbReference>
<dbReference type="HPA" id="ENSG00000147081">
    <property type="expression patterns" value="Tissue enriched (testis)"/>
</dbReference>
<dbReference type="MalaCards" id="AKAP4"/>
<dbReference type="MIM" id="300185">
    <property type="type" value="gene"/>
</dbReference>
<dbReference type="neXtProt" id="NX_Q5JQC9"/>
<dbReference type="OpenTargets" id="ENSG00000147081"/>
<dbReference type="Orphanet" id="276234">
    <property type="disease" value="Non-syndromic male infertility due to sperm motility disorder"/>
</dbReference>
<dbReference type="PharmGKB" id="PA24668"/>
<dbReference type="VEuPathDB" id="HostDB:ENSG00000147081"/>
<dbReference type="eggNOG" id="ENOG502QQXJ">
    <property type="taxonomic scope" value="Eukaryota"/>
</dbReference>
<dbReference type="GeneTree" id="ENSGT00940000153313"/>
<dbReference type="HOGENOM" id="CLU_016756_1_0_1"/>
<dbReference type="InParanoid" id="Q5JQC9"/>
<dbReference type="OMA" id="KLCMLMA"/>
<dbReference type="OrthoDB" id="6154436at2759"/>
<dbReference type="PAN-GO" id="Q5JQC9">
    <property type="GO annotations" value="5 GO annotations based on evolutionary models"/>
</dbReference>
<dbReference type="PhylomeDB" id="Q5JQC9"/>
<dbReference type="TreeFam" id="TF105403"/>
<dbReference type="PathwayCommons" id="Q5JQC9"/>
<dbReference type="SignaLink" id="Q5JQC9"/>
<dbReference type="SIGNOR" id="Q5JQC9"/>
<dbReference type="BioGRID-ORCS" id="8852">
    <property type="hits" value="26 hits in 772 CRISPR screens"/>
</dbReference>
<dbReference type="ChiTaRS" id="AKAP4">
    <property type="organism name" value="human"/>
</dbReference>
<dbReference type="GeneWiki" id="AKAP4"/>
<dbReference type="GenomeRNAi" id="8852"/>
<dbReference type="Pharos" id="Q5JQC9">
    <property type="development level" value="Tbio"/>
</dbReference>
<dbReference type="PRO" id="PR:Q5JQC9"/>
<dbReference type="Proteomes" id="UP000005640">
    <property type="component" value="Chromosome X"/>
</dbReference>
<dbReference type="RNAct" id="Q5JQC9">
    <property type="molecule type" value="protein"/>
</dbReference>
<dbReference type="Bgee" id="ENSG00000147081">
    <property type="expression patterns" value="Expressed in sperm and 72 other cell types or tissues"/>
</dbReference>
<dbReference type="ExpressionAtlas" id="Q5JQC9">
    <property type="expression patterns" value="baseline and differential"/>
</dbReference>
<dbReference type="GO" id="GO:0005952">
    <property type="term" value="C:cAMP-dependent protein kinase complex"/>
    <property type="evidence" value="ECO:0000303"/>
    <property type="project" value="UniProtKB"/>
</dbReference>
<dbReference type="GO" id="GO:0005737">
    <property type="term" value="C:cytoplasm"/>
    <property type="evidence" value="ECO:0000318"/>
    <property type="project" value="GO_Central"/>
</dbReference>
<dbReference type="GO" id="GO:0005856">
    <property type="term" value="C:cytoskeleton"/>
    <property type="evidence" value="ECO:0000304"/>
    <property type="project" value="ProtInc"/>
</dbReference>
<dbReference type="GO" id="GO:0031514">
    <property type="term" value="C:motile cilium"/>
    <property type="evidence" value="ECO:0000314"/>
    <property type="project" value="UniProtKB"/>
</dbReference>
<dbReference type="GO" id="GO:0005634">
    <property type="term" value="C:nucleus"/>
    <property type="evidence" value="ECO:0007005"/>
    <property type="project" value="UniProtKB"/>
</dbReference>
<dbReference type="GO" id="GO:0048471">
    <property type="term" value="C:perinuclear region of cytoplasm"/>
    <property type="evidence" value="ECO:0007669"/>
    <property type="project" value="Ensembl"/>
</dbReference>
<dbReference type="GO" id="GO:0097229">
    <property type="term" value="C:sperm end piece"/>
    <property type="evidence" value="ECO:0000314"/>
    <property type="project" value="UniProtKB"/>
</dbReference>
<dbReference type="GO" id="GO:0035686">
    <property type="term" value="C:sperm fibrous sheath"/>
    <property type="evidence" value="ECO:0000314"/>
    <property type="project" value="UniProtKB"/>
</dbReference>
<dbReference type="GO" id="GO:0036126">
    <property type="term" value="C:sperm flagellum"/>
    <property type="evidence" value="ECO:0000314"/>
    <property type="project" value="UniProtKB"/>
</dbReference>
<dbReference type="GO" id="GO:0120212">
    <property type="term" value="C:sperm head-tail coupling apparatus"/>
    <property type="evidence" value="ECO:0000314"/>
    <property type="project" value="UniProtKB"/>
</dbReference>
<dbReference type="GO" id="GO:0097225">
    <property type="term" value="C:sperm midpiece"/>
    <property type="evidence" value="ECO:0000314"/>
    <property type="project" value="UniProtKB"/>
</dbReference>
<dbReference type="GO" id="GO:0097228">
    <property type="term" value="C:sperm principal piece"/>
    <property type="evidence" value="ECO:0000314"/>
    <property type="project" value="UniProtKB"/>
</dbReference>
<dbReference type="GO" id="GO:0030018">
    <property type="term" value="C:Z disc"/>
    <property type="evidence" value="ECO:0007669"/>
    <property type="project" value="Ensembl"/>
</dbReference>
<dbReference type="GO" id="GO:0051018">
    <property type="term" value="F:protein kinase A binding"/>
    <property type="evidence" value="ECO:0000250"/>
    <property type="project" value="UniProtKB"/>
</dbReference>
<dbReference type="GO" id="GO:0007178">
    <property type="term" value="P:cell surface receptor protein serine/threonine kinase signaling pathway"/>
    <property type="evidence" value="ECO:0007669"/>
    <property type="project" value="Ensembl"/>
</dbReference>
<dbReference type="GO" id="GO:0051649">
    <property type="term" value="P:establishment of localization in cell"/>
    <property type="evidence" value="ECO:0007669"/>
    <property type="project" value="Ensembl"/>
</dbReference>
<dbReference type="GO" id="GO:0045184">
    <property type="term" value="P:establishment of protein localization"/>
    <property type="evidence" value="ECO:0007669"/>
    <property type="project" value="Ensembl"/>
</dbReference>
<dbReference type="GO" id="GO:0030317">
    <property type="term" value="P:flagellated sperm motility"/>
    <property type="evidence" value="ECO:0000315"/>
    <property type="project" value="UniProtKB"/>
</dbReference>
<dbReference type="GO" id="GO:0008104">
    <property type="term" value="P:protein localization"/>
    <property type="evidence" value="ECO:0000318"/>
    <property type="project" value="GO_Central"/>
</dbReference>
<dbReference type="GO" id="GO:0007165">
    <property type="term" value="P:signal transduction"/>
    <property type="evidence" value="ECO:0000304"/>
    <property type="project" value="ProtInc"/>
</dbReference>
<dbReference type="GO" id="GO:0007338">
    <property type="term" value="P:single fertilization"/>
    <property type="evidence" value="ECO:0000304"/>
    <property type="project" value="ProtInc"/>
</dbReference>
<dbReference type="GO" id="GO:0120316">
    <property type="term" value="P:sperm flagellum assembly"/>
    <property type="evidence" value="ECO:0007669"/>
    <property type="project" value="Ensembl"/>
</dbReference>
<dbReference type="GO" id="GO:0007283">
    <property type="term" value="P:spermatogenesis"/>
    <property type="evidence" value="ECO:0000250"/>
    <property type="project" value="UniProtKB"/>
</dbReference>
<dbReference type="InterPro" id="IPR020799">
    <property type="entry name" value="AKAP_110"/>
</dbReference>
<dbReference type="InterPro" id="IPR018292">
    <property type="entry name" value="AKAP_110_C"/>
</dbReference>
<dbReference type="InterPro" id="IPR018459">
    <property type="entry name" value="RII-bd_1"/>
</dbReference>
<dbReference type="InterPro" id="IPR008382">
    <property type="entry name" value="SPHK1-interactor_AKAP_110"/>
</dbReference>
<dbReference type="PANTHER" id="PTHR10226">
    <property type="entry name" value="A KINASE ANCHOR PROTEIN"/>
    <property type="match status" value="1"/>
</dbReference>
<dbReference type="PANTHER" id="PTHR10226:SF8">
    <property type="entry name" value="A-KINASE ANCHOR PROTEIN 4"/>
    <property type="match status" value="1"/>
</dbReference>
<dbReference type="Pfam" id="PF05716">
    <property type="entry name" value="AKAP_110"/>
    <property type="match status" value="3"/>
</dbReference>
<dbReference type="Pfam" id="PF10522">
    <property type="entry name" value="RII_binding_1"/>
    <property type="match status" value="1"/>
</dbReference>
<dbReference type="SMART" id="SM00807">
    <property type="entry name" value="AKAP_110"/>
    <property type="match status" value="1"/>
</dbReference>
<gene>
    <name evidence="15" type="primary">AKAP4</name>
    <name type="synonym">AKAP82</name>
</gene>
<feature type="propeptide" id="PRO_0000248230" evidence="3">
    <location>
        <begin position="1"/>
        <end position="188"/>
    </location>
</feature>
<feature type="chain" id="PRO_0000248231" description="A-kinase anchor protein 4" evidence="2">
    <location>
        <begin position="189"/>
        <end position="854"/>
    </location>
</feature>
<feature type="region of interest" description="Disordered" evidence="4">
    <location>
        <begin position="184"/>
        <end position="207"/>
    </location>
</feature>
<feature type="region of interest" description="PKA-RI and PKA-RII subunit binding domain" evidence="2">
    <location>
        <begin position="219"/>
        <end position="232"/>
    </location>
</feature>
<feature type="region of interest" description="Disordered" evidence="4">
    <location>
        <begin position="287"/>
        <end position="323"/>
    </location>
</feature>
<feature type="region of interest" description="PKA-RI-alpha subunit binding domain" evidence="2">
    <location>
        <begin position="336"/>
        <end position="345"/>
    </location>
</feature>
<feature type="compositionally biased region" description="Basic and acidic residues" evidence="4">
    <location>
        <begin position="288"/>
        <end position="297"/>
    </location>
</feature>
<feature type="compositionally biased region" description="Basic and acidic residues" evidence="4">
    <location>
        <begin position="311"/>
        <end position="323"/>
    </location>
</feature>
<feature type="modified residue" description="Phosphoserine" evidence="1">
    <location>
        <position position="96"/>
    </location>
</feature>
<feature type="modified residue" description="Phosphoserine" evidence="1">
    <location>
        <position position="130"/>
    </location>
</feature>
<feature type="modified residue" description="Phosphoserine" evidence="1">
    <location>
        <position position="190"/>
    </location>
</feature>
<feature type="modified residue" description="Phosphoserine" evidence="1">
    <location>
        <position position="213"/>
    </location>
</feature>
<feature type="modified residue" description="Phosphoserine" evidence="1">
    <location>
        <position position="226"/>
    </location>
</feature>
<feature type="modified residue" description="Phosphoserine" evidence="1">
    <location>
        <position position="272"/>
    </location>
</feature>
<feature type="modified residue" description="Phosphoserine" evidence="16">
    <location>
        <position position="300"/>
    </location>
</feature>
<feature type="modified residue" description="Phosphotyrosine" evidence="16">
    <location>
        <position position="303"/>
    </location>
</feature>
<feature type="modified residue" description="Phosphoserine" evidence="16">
    <location>
        <position position="304"/>
    </location>
</feature>
<feature type="modified residue" description="Phosphoserine" evidence="1">
    <location>
        <position position="307"/>
    </location>
</feature>
<feature type="modified residue" description="Phosphoserine" evidence="1">
    <location>
        <position position="342"/>
    </location>
</feature>
<feature type="modified residue" description="Phosphoserine" evidence="1">
    <location>
        <position position="432"/>
    </location>
</feature>
<feature type="modified residue" description="Phosphoserine" evidence="1">
    <location>
        <position position="443"/>
    </location>
</feature>
<feature type="modified residue" description="Phosphoserine" evidence="1">
    <location>
        <position position="445"/>
    </location>
</feature>
<feature type="modified residue" description="Phosphoserine" evidence="16">
    <location>
        <position position="447"/>
    </location>
</feature>
<feature type="modified residue" description="Phosphoserine" evidence="16">
    <location>
        <position position="450"/>
    </location>
</feature>
<feature type="modified residue" description="Phosphoserine" evidence="1">
    <location>
        <position position="464"/>
    </location>
</feature>
<feature type="modified residue" description="Phosphoserine" evidence="1">
    <location>
        <position position="492"/>
    </location>
</feature>
<feature type="modified residue" description="Phosphothreonine" evidence="1">
    <location>
        <position position="506"/>
    </location>
</feature>
<feature type="modified residue" description="Phosphoserine" evidence="1">
    <location>
        <position position="536"/>
    </location>
</feature>
<feature type="modified residue" description="Phosphoserine" evidence="2">
    <location>
        <position position="581"/>
    </location>
</feature>
<feature type="modified residue" description="Phosphoserine" evidence="1">
    <location>
        <position position="627"/>
    </location>
</feature>
<feature type="modified residue" description="Phosphoserine" evidence="1">
    <location>
        <position position="703"/>
    </location>
</feature>
<feature type="splice variant" id="VSP_052142" description="In isoform 2." evidence="11">
    <location>
        <begin position="1"/>
        <end position="9"/>
    </location>
</feature>
<feature type="sequence variant" id="VAR_048206" description="In dbSNP:rs17174078.">
    <original>H</original>
    <variation>R</variation>
    <location>
        <position position="233"/>
    </location>
</feature>
<feature type="sequence variant" id="VAR_089700" description="Found in patients with spermatogenic failure; decreased interaction with QRICH2; likely pathogenic; dbSNP:rs372025415." evidence="6">
    <original>R</original>
    <variation>C</variation>
    <location>
        <position position="429"/>
    </location>
</feature>
<feature type="sequence variant" id="VAR_089701" description="Found in patients with spermatogenic failure; likely pathogenic; dbSNP:rs200249971." evidence="7">
    <original>R</original>
    <variation>H</variation>
    <location>
        <position position="429"/>
    </location>
</feature>
<feature type="sequence variant" id="VAR_027266" description="In dbSNP:rs12012704.">
    <original>A</original>
    <variation>G</variation>
    <location>
        <position position="673"/>
    </location>
</feature>
<feature type="sequence conflict" description="In Ref. 2; AAC79433." evidence="12" ref="2">
    <original>L</original>
    <variation>W</variation>
    <location>
        <position position="123"/>
    </location>
</feature>
<feature type="sequence conflict" description="In Ref. 2; AAC79433." evidence="12" ref="2">
    <original>A</original>
    <variation>E</variation>
    <location>
        <position position="128"/>
    </location>
</feature>
<feature type="sequence conflict" description="In Ref. 2; AAC79433." evidence="12" ref="2">
    <original>E</original>
    <variation>D</variation>
    <location>
        <position position="146"/>
    </location>
</feature>
<feature type="sequence conflict" description="In Ref. 1; CAA75494." evidence="12" ref="1">
    <original>R</original>
    <variation>W</variation>
    <location>
        <position position="369"/>
    </location>
</feature>
<feature type="sequence conflict" description="In Ref. 2; AAC79433." evidence="12" ref="2">
    <original>KR</original>
    <variation>IL</variation>
    <location>
        <begin position="428"/>
        <end position="429"/>
    </location>
</feature>
<feature type="sequence conflict" description="In Ref. 2; AAC79433." evidence="12" ref="2">
    <original>K</original>
    <variation>M</variation>
    <location>
        <position position="517"/>
    </location>
</feature>
<feature type="sequence conflict" description="In Ref. 1; CAA75494." evidence="12" ref="1">
    <original>T</original>
    <variation>I</variation>
    <location>
        <position position="560"/>
    </location>
</feature>
<sequence>MMAYSDTTMMSDDIDWLRSHRGVCKVDLYNPEGQQDQDRKVICFVDVSTLNVEDKDYKDAASSSSEGNLNLGSLEEKEIIVIKDTEKKDQSKTEGSVCLFKQAPSDPVSVLNWLLSDLQKYALGFQHALSPSTSTCKHKVGDTEGEYHRASSENCYSVYADQVNIDYLMNRPQNLRLEMTAAKNTNNNQSPSAPPAKPPSTQRAVISPDGECSIDDLSFYVNRLSSLVIQMAHKEIKEKLEGKSKCLHHSICPSPGNKERISPRTPASKIASEMAYEAVELTAAEMRGTGEESREGGQKSFLYSELSNKSKSGDKQMSQRESKEFADSISKGLMVYANQVASDMMVSLMKTLKVHSSGKPIPASVVLKRVLLRHTKEIVSDLIDSCMKNLHNITGVLMTDSDFVSAVKRNLFNQWKQNATDIMEAMLKRLVSALIGEEKETKSQSLSYASLKAGSHDPKCRNQSLEFSTMKAEMKERDKGKMKSDPCKSLTSAEKVGEHILKEGLTIWNQKQGNSCKVATKACSNKDEKGEKINASTDSLAKDLIVSALKLIQYHLTQQTKGKDTCEEDCPGSTMGYMAQSTQYEKCGGGQSAKALSVKQLESHRAPGPSTCQKENQHLDSQKMDMSNIVLMLIQKLLNENPFKCEDPCEGENKCSEPRASKAASMSNRSDKAEEQCQEHQELDCTSGMKQANGQFIDKLVESVMKLCLIMAKYSNDGAALAELEEQAASANKPNFRGTRCIHSGAMPQNYQDSLGHEVIVNNQCSTNSLQKQLQAVLQWIAASQFNVPMLYFMGDKDGQLEKLPQVSAKAAEKGYSVGGLLQEVMKFAKERQPDEAVGKVARKQLLDWLLANL</sequence>
<evidence type="ECO:0000250" key="1">
    <source>
        <dbReference type="UniProtKB" id="O35774"/>
    </source>
</evidence>
<evidence type="ECO:0000250" key="2">
    <source>
        <dbReference type="UniProtKB" id="Q60662"/>
    </source>
</evidence>
<evidence type="ECO:0000255" key="3"/>
<evidence type="ECO:0000256" key="4">
    <source>
        <dbReference type="SAM" id="MobiDB-lite"/>
    </source>
</evidence>
<evidence type="ECO:0000269" key="5">
    <source>
    </source>
</evidence>
<evidence type="ECO:0000269" key="6">
    <source>
    </source>
</evidence>
<evidence type="ECO:0000269" key="7">
    <source>
    </source>
</evidence>
<evidence type="ECO:0000269" key="8">
    <source>
    </source>
</evidence>
<evidence type="ECO:0000269" key="9">
    <source>
    </source>
</evidence>
<evidence type="ECO:0000303" key="10">
    <source>
    </source>
</evidence>
<evidence type="ECO:0000303" key="11">
    <source>
    </source>
</evidence>
<evidence type="ECO:0000305" key="12"/>
<evidence type="ECO:0000312" key="13">
    <source>
        <dbReference type="EMBL" id="AAC79433.1"/>
    </source>
</evidence>
<evidence type="ECO:0000312" key="14">
    <source>
        <dbReference type="EMBL" id="CAA75494.1"/>
    </source>
</evidence>
<evidence type="ECO:0000312" key="15">
    <source>
        <dbReference type="HGNC" id="HGNC:374"/>
    </source>
</evidence>
<evidence type="ECO:0007744" key="16">
    <source>
    </source>
</evidence>
<name>AKAP4_HUMAN</name>
<comment type="function">
    <text evidence="6 9">Major structural component of sperm fibrous sheath (PubMed:9822690). Plays a role in sperm motility (PubMed:34415320, PubMed:9822690).</text>
</comment>
<comment type="subunit">
    <text evidence="2 6">Interacts with PRKAR1A and PRKAR2A (By similarity). Interacts with ENO4 (By similarity). Interacts with QRICH2 (PubMed:34415320).</text>
</comment>
<comment type="interaction">
    <interactant intactId="EBI-16628643">
        <id>Q5JQC9</id>
    </interactant>
    <interactant intactId="EBI-3964623">
        <id>P36873-2</id>
        <label>PPP1CC</label>
    </interactant>
    <organismsDiffer>false</organismsDiffer>
    <experiments>4</experiments>
</comment>
<comment type="subcellular location">
    <subcellularLocation>
        <location evidence="5 6 9">Cell projection</location>
        <location evidence="5 6 9">Cilium</location>
        <location evidence="5 6 9">Flagellum</location>
    </subcellularLocation>
    <text evidence="9">Localizes to the principle piece of the sperm flagellum.</text>
</comment>
<comment type="alternative products">
    <event type="alternative splicing"/>
    <isoform>
        <id>Q5JQC9-1</id>
        <name evidence="8">1</name>
        <sequence type="displayed"/>
    </isoform>
    <isoform>
        <id>Q5JQC9-2</id>
        <name evidence="9">2</name>
        <sequence type="described" ref="VSP_052142"/>
    </isoform>
</comment>
<comment type="tissue specificity">
    <text evidence="8">Testis specific; only expressed in round spermatids.</text>
</comment>
<comment type="developmental stage">
    <text evidence="8">Post-meiotic phase of spermatogenesis.</text>
</comment>
<comment type="domain">
    <text evidence="2">RI-alpha binding site, predicted to form an amphipathic helix, could participate in protein-protein interactions with a complementary surface on the R-subunit dimer.</text>
</comment>
<comment type="PTM">
    <text evidence="2">Phosphorylated by STK33 during sperm flagella assembly.</text>
</comment>
<comment type="disease">
    <text evidence="6 7">Spermatogenic failure (PubMed:34415320, PubMed:38050179). A male infertility disorder caused by spermatogenesis defects that result in non-obstructive azoospermia (PubMed:34415320, PubMed:38050179). The disease is caused by variants affecting the gene represented in this entry (PubMed:34415320, PubMed:38050179).</text>
</comment>
<comment type="similarity">
    <text evidence="12">Belongs to the AKAP110 family.</text>
</comment>
<comment type="sequence caution" evidence="12">
    <conflict type="frameshift">
        <sequence resource="EMBL-CDS" id="CAA75494"/>
    </conflict>
</comment>
<protein>
    <recommendedName>
        <fullName>A-kinase anchor protein 4</fullName>
        <shortName>AKAP-4</shortName>
    </recommendedName>
    <alternativeName>
        <fullName evidence="11">A-kinase anchor protein 82 kDa</fullName>
        <shortName evidence="11">AKAP 82</shortName>
        <shortName evidence="11">hAKAP82</shortName>
    </alternativeName>
    <alternativeName>
        <fullName evidence="10">Major sperm fibrous sheath protein</fullName>
        <shortName evidence="10">HI</shortName>
    </alternativeName>
    <alternativeName>
        <fullName>Protein kinase A-anchoring protein 4</fullName>
        <shortName>PRKA4</shortName>
    </alternativeName>
</protein>
<proteinExistence type="evidence at protein level"/>
<reference evidence="12 14" key="1">
    <citation type="journal article" date="1998" name="Biochem. Biophys. Res. Commun.">
        <title>Molecular cloning of human testis mRNA specifically expressed in haploid germ cells, having structural homology with the A-kinase anchoring proteins.</title>
        <authorList>
            <person name="Mohapatra B."/>
            <person name="Verma S."/>
            <person name="Shankar S."/>
            <person name="Suri A."/>
        </authorList>
    </citation>
    <scope>NUCLEOTIDE SEQUENCE [MRNA] (ISOFORM 1)</scope>
    <scope>TISSUE SPECIFICITY</scope>
    <scope>DEVELOPMENTAL STAGE</scope>
    <source>
        <tissue evidence="14">Testis</tissue>
    </source>
</reference>
<reference evidence="12 13" key="2">
    <citation type="journal article" date="1998" name="J. Biol. Chem.">
        <title>An X-linked gene encodes a major human sperm fibrous sheath protein, hAKAP82. Genomic organization, protein kinase A-RII binding, and distribution of the precursor in the sperm tail.</title>
        <authorList>
            <person name="Turner R.M.O."/>
            <person name="Johnson L.R."/>
            <person name="Haig-Ladewig L."/>
            <person name="Gerton G.L."/>
            <person name="Moss S.B."/>
        </authorList>
    </citation>
    <scope>NUCLEOTIDE SEQUENCE [MRNA] (ISOFORM 2)</scope>
    <scope>FUNCTION</scope>
    <scope>SUBCELLULAR LOCATION</scope>
</reference>
<reference evidence="12" key="3">
    <citation type="journal article" date="2005" name="Nature">
        <title>The DNA sequence of the human X chromosome.</title>
        <authorList>
            <person name="Ross M.T."/>
            <person name="Grafham D.V."/>
            <person name="Coffey A.J."/>
            <person name="Scherer S."/>
            <person name="McLay K."/>
            <person name="Muzny D."/>
            <person name="Platzer M."/>
            <person name="Howell G.R."/>
            <person name="Burrows C."/>
            <person name="Bird C.P."/>
            <person name="Frankish A."/>
            <person name="Lovell F.L."/>
            <person name="Howe K.L."/>
            <person name="Ashurst J.L."/>
            <person name="Fulton R.S."/>
            <person name="Sudbrak R."/>
            <person name="Wen G."/>
            <person name="Jones M.C."/>
            <person name="Hurles M.E."/>
            <person name="Andrews T.D."/>
            <person name="Scott C.E."/>
            <person name="Searle S."/>
            <person name="Ramser J."/>
            <person name="Whittaker A."/>
            <person name="Deadman R."/>
            <person name="Carter N.P."/>
            <person name="Hunt S.E."/>
            <person name="Chen R."/>
            <person name="Cree A."/>
            <person name="Gunaratne P."/>
            <person name="Havlak P."/>
            <person name="Hodgson A."/>
            <person name="Metzker M.L."/>
            <person name="Richards S."/>
            <person name="Scott G."/>
            <person name="Steffen D."/>
            <person name="Sodergren E."/>
            <person name="Wheeler D.A."/>
            <person name="Worley K.C."/>
            <person name="Ainscough R."/>
            <person name="Ambrose K.D."/>
            <person name="Ansari-Lari M.A."/>
            <person name="Aradhya S."/>
            <person name="Ashwell R.I."/>
            <person name="Babbage A.K."/>
            <person name="Bagguley C.L."/>
            <person name="Ballabio A."/>
            <person name="Banerjee R."/>
            <person name="Barker G.E."/>
            <person name="Barlow K.F."/>
            <person name="Barrett I.P."/>
            <person name="Bates K.N."/>
            <person name="Beare D.M."/>
            <person name="Beasley H."/>
            <person name="Beasley O."/>
            <person name="Beck A."/>
            <person name="Bethel G."/>
            <person name="Blechschmidt K."/>
            <person name="Brady N."/>
            <person name="Bray-Allen S."/>
            <person name="Bridgeman A.M."/>
            <person name="Brown A.J."/>
            <person name="Brown M.J."/>
            <person name="Bonnin D."/>
            <person name="Bruford E.A."/>
            <person name="Buhay C."/>
            <person name="Burch P."/>
            <person name="Burford D."/>
            <person name="Burgess J."/>
            <person name="Burrill W."/>
            <person name="Burton J."/>
            <person name="Bye J.M."/>
            <person name="Carder C."/>
            <person name="Carrel L."/>
            <person name="Chako J."/>
            <person name="Chapman J.C."/>
            <person name="Chavez D."/>
            <person name="Chen E."/>
            <person name="Chen G."/>
            <person name="Chen Y."/>
            <person name="Chen Z."/>
            <person name="Chinault C."/>
            <person name="Ciccodicola A."/>
            <person name="Clark S.Y."/>
            <person name="Clarke G."/>
            <person name="Clee C.M."/>
            <person name="Clegg S."/>
            <person name="Clerc-Blankenburg K."/>
            <person name="Clifford K."/>
            <person name="Cobley V."/>
            <person name="Cole C.G."/>
            <person name="Conquer J.S."/>
            <person name="Corby N."/>
            <person name="Connor R.E."/>
            <person name="David R."/>
            <person name="Davies J."/>
            <person name="Davis C."/>
            <person name="Davis J."/>
            <person name="Delgado O."/>
            <person name="Deshazo D."/>
            <person name="Dhami P."/>
            <person name="Ding Y."/>
            <person name="Dinh H."/>
            <person name="Dodsworth S."/>
            <person name="Draper H."/>
            <person name="Dugan-Rocha S."/>
            <person name="Dunham A."/>
            <person name="Dunn M."/>
            <person name="Durbin K.J."/>
            <person name="Dutta I."/>
            <person name="Eades T."/>
            <person name="Ellwood M."/>
            <person name="Emery-Cohen A."/>
            <person name="Errington H."/>
            <person name="Evans K.L."/>
            <person name="Faulkner L."/>
            <person name="Francis F."/>
            <person name="Frankland J."/>
            <person name="Fraser A.E."/>
            <person name="Galgoczy P."/>
            <person name="Gilbert J."/>
            <person name="Gill R."/>
            <person name="Gloeckner G."/>
            <person name="Gregory S.G."/>
            <person name="Gribble S."/>
            <person name="Griffiths C."/>
            <person name="Grocock R."/>
            <person name="Gu Y."/>
            <person name="Gwilliam R."/>
            <person name="Hamilton C."/>
            <person name="Hart E.A."/>
            <person name="Hawes A."/>
            <person name="Heath P.D."/>
            <person name="Heitmann K."/>
            <person name="Hennig S."/>
            <person name="Hernandez J."/>
            <person name="Hinzmann B."/>
            <person name="Ho S."/>
            <person name="Hoffs M."/>
            <person name="Howden P.J."/>
            <person name="Huckle E.J."/>
            <person name="Hume J."/>
            <person name="Hunt P.J."/>
            <person name="Hunt A.R."/>
            <person name="Isherwood J."/>
            <person name="Jacob L."/>
            <person name="Johnson D."/>
            <person name="Jones S."/>
            <person name="de Jong P.J."/>
            <person name="Joseph S.S."/>
            <person name="Keenan S."/>
            <person name="Kelly S."/>
            <person name="Kershaw J.K."/>
            <person name="Khan Z."/>
            <person name="Kioschis P."/>
            <person name="Klages S."/>
            <person name="Knights A.J."/>
            <person name="Kosiura A."/>
            <person name="Kovar-Smith C."/>
            <person name="Laird G.K."/>
            <person name="Langford C."/>
            <person name="Lawlor S."/>
            <person name="Leversha M."/>
            <person name="Lewis L."/>
            <person name="Liu W."/>
            <person name="Lloyd C."/>
            <person name="Lloyd D.M."/>
            <person name="Loulseged H."/>
            <person name="Loveland J.E."/>
            <person name="Lovell J.D."/>
            <person name="Lozado R."/>
            <person name="Lu J."/>
            <person name="Lyne R."/>
            <person name="Ma J."/>
            <person name="Maheshwari M."/>
            <person name="Matthews L.H."/>
            <person name="McDowall J."/>
            <person name="McLaren S."/>
            <person name="McMurray A."/>
            <person name="Meidl P."/>
            <person name="Meitinger T."/>
            <person name="Milne S."/>
            <person name="Miner G."/>
            <person name="Mistry S.L."/>
            <person name="Morgan M."/>
            <person name="Morris S."/>
            <person name="Mueller I."/>
            <person name="Mullikin J.C."/>
            <person name="Nguyen N."/>
            <person name="Nordsiek G."/>
            <person name="Nyakatura G."/>
            <person name="O'dell C.N."/>
            <person name="Okwuonu G."/>
            <person name="Palmer S."/>
            <person name="Pandian R."/>
            <person name="Parker D."/>
            <person name="Parrish J."/>
            <person name="Pasternak S."/>
            <person name="Patel D."/>
            <person name="Pearce A.V."/>
            <person name="Pearson D.M."/>
            <person name="Pelan S.E."/>
            <person name="Perez L."/>
            <person name="Porter K.M."/>
            <person name="Ramsey Y."/>
            <person name="Reichwald K."/>
            <person name="Rhodes S."/>
            <person name="Ridler K.A."/>
            <person name="Schlessinger D."/>
            <person name="Schueler M.G."/>
            <person name="Sehra H.K."/>
            <person name="Shaw-Smith C."/>
            <person name="Shen H."/>
            <person name="Sheridan E.M."/>
            <person name="Shownkeen R."/>
            <person name="Skuce C.D."/>
            <person name="Smith M.L."/>
            <person name="Sotheran E.C."/>
            <person name="Steingruber H.E."/>
            <person name="Steward C.A."/>
            <person name="Storey R."/>
            <person name="Swann R.M."/>
            <person name="Swarbreck D."/>
            <person name="Tabor P.E."/>
            <person name="Taudien S."/>
            <person name="Taylor T."/>
            <person name="Teague B."/>
            <person name="Thomas K."/>
            <person name="Thorpe A."/>
            <person name="Timms K."/>
            <person name="Tracey A."/>
            <person name="Trevanion S."/>
            <person name="Tromans A.C."/>
            <person name="d'Urso M."/>
            <person name="Verduzco D."/>
            <person name="Villasana D."/>
            <person name="Waldron L."/>
            <person name="Wall M."/>
            <person name="Wang Q."/>
            <person name="Warren J."/>
            <person name="Warry G.L."/>
            <person name="Wei X."/>
            <person name="West A."/>
            <person name="Whitehead S.L."/>
            <person name="Whiteley M.N."/>
            <person name="Wilkinson J.E."/>
            <person name="Willey D.L."/>
            <person name="Williams G."/>
            <person name="Williams L."/>
            <person name="Williamson A."/>
            <person name="Williamson H."/>
            <person name="Wilming L."/>
            <person name="Woodmansey R.L."/>
            <person name="Wray P.W."/>
            <person name="Yen J."/>
            <person name="Zhang J."/>
            <person name="Zhou J."/>
            <person name="Zoghbi H."/>
            <person name="Zorilla S."/>
            <person name="Buck D."/>
            <person name="Reinhardt R."/>
            <person name="Poustka A."/>
            <person name="Rosenthal A."/>
            <person name="Lehrach H."/>
            <person name="Meindl A."/>
            <person name="Minx P.J."/>
            <person name="Hillier L.W."/>
            <person name="Willard H.F."/>
            <person name="Wilson R.K."/>
            <person name="Waterston R.H."/>
            <person name="Rice C.M."/>
            <person name="Vaudin M."/>
            <person name="Coulson A."/>
            <person name="Nelson D.L."/>
            <person name="Weinstock G."/>
            <person name="Sulston J.E."/>
            <person name="Durbin R.M."/>
            <person name="Hubbard T."/>
            <person name="Gibbs R.A."/>
            <person name="Beck S."/>
            <person name="Rogers J."/>
            <person name="Bentley D.R."/>
        </authorList>
    </citation>
    <scope>NUCLEOTIDE SEQUENCE [LARGE SCALE GENOMIC DNA]</scope>
</reference>
<reference key="4">
    <citation type="journal article" date="2004" name="Genome Res.">
        <title>The status, quality, and expansion of the NIH full-length cDNA project: the Mammalian Gene Collection (MGC).</title>
        <authorList>
            <consortium name="The MGC Project Team"/>
        </authorList>
    </citation>
    <scope>NUCLEOTIDE SEQUENCE [LARGE SCALE MRNA] (ISOFORM 1)</scope>
    <source>
        <tissue>Testis</tissue>
    </source>
</reference>
<reference key="5">
    <citation type="journal article" date="2003" name="J. Biol. Chem.">
        <title>Phosphoproteome analysis of capacitated human sperm. Evidence of tyrosine phosphorylation of a kinase-anchoring protein 3 and valosin-containing protein/p97 during capacitation.</title>
        <authorList>
            <person name="Ficarro S."/>
            <person name="Chertihin O."/>
            <person name="Westbrook V.A."/>
            <person name="White F."/>
            <person name="Jayes F."/>
            <person name="Kalab P."/>
            <person name="Marto J.A."/>
            <person name="Shabanowitz J."/>
            <person name="Herr J.C."/>
            <person name="Hunt D.F."/>
            <person name="Visconti P.E."/>
        </authorList>
    </citation>
    <scope>PHOSPHORYLATION [LARGE SCALE ANALYSIS] AT SER-300; TYR-303; SER-304; SER-447 AND SER-450</scope>
    <scope>IDENTIFICATION BY MASS SPECTROMETRY [LARGE SCALE ANALYSIS]</scope>
    <source>
        <tissue>Sperm</tissue>
    </source>
</reference>
<reference key="6">
    <citation type="journal article" date="2019" name="J. Proteome Res.">
        <title>Cell Type-Specific Expression of Testis Elevated Genes Based on Transcriptomics and Antibody-Based Proteomics.</title>
        <authorList>
            <person name="Pineau C."/>
            <person name="Hikmet F."/>
            <person name="Zhang C."/>
            <person name="Oksvold P."/>
            <person name="Chen S."/>
            <person name="Fagerberg L."/>
            <person name="Uhlen M."/>
            <person name="Lindskog C."/>
        </authorList>
    </citation>
    <scope>SUBCELLULAR LOCATION</scope>
</reference>
<reference key="7">
    <citation type="journal article" date="2021" name="Hum. Mol. Genet.">
        <title>Loss-of-function missense variant of AKAP4 induced male infertility through reduced interaction with QRICH2 during sperm flagella development.</title>
        <authorList>
            <person name="Zhang G."/>
            <person name="Li D."/>
            <person name="Tu C."/>
            <person name="Meng L."/>
            <person name="Tan Y."/>
            <person name="Ji Z."/>
            <person name="Cheng J."/>
            <person name="Lu G."/>
            <person name="Lin G."/>
            <person name="Zhang H."/>
            <person name="Sun J."/>
            <person name="Wang M."/>
            <person name="Du J."/>
            <person name="Xu W."/>
        </authorList>
    </citation>
    <scope>FUNCTION</scope>
    <scope>SUBCELLULAR LOCATION</scope>
    <scope>INTERACTION WITH QRICH2</scope>
    <scope>INVOLVEMENT IN SPERMATOGENIC FAILURE</scope>
    <scope>VARIANT CYS-429</scope>
    <scope>CHARACTERIZATION OF VARIANT CYS-429</scope>
</reference>
<reference key="8">
    <citation type="journal article" date="2023" name="Clin. Transl. Med.">
        <title>A pathogenic AKAP4 variant, p.R429H, causes male in/subfertility in humans and mice.</title>
        <authorList>
            <person name="Wei H."/>
            <person name="Zhang X."/>
            <person name="Wang C."/>
            <person name="Wang J."/>
            <person name="Li T."/>
            <person name="Chen S."/>
            <person name="Li H."/>
            <person name="Wang B."/>
        </authorList>
    </citation>
    <scope>INVOLVEMENT IN SPERMATOGENIC FAILURE</scope>
    <scope>VARIANT HIS-429</scope>
</reference>
<keyword id="KW-0025">Alternative splicing</keyword>
<keyword id="KW-0966">Cell projection</keyword>
<keyword id="KW-0969">Cilium</keyword>
<keyword id="KW-0970">Cilium biogenesis/degradation</keyword>
<keyword id="KW-0225">Disease variant</keyword>
<keyword id="KW-0282">Flagellum</keyword>
<keyword id="KW-0597">Phosphoprotein</keyword>
<keyword id="KW-1267">Proteomics identification</keyword>
<keyword id="KW-1185">Reference proteome</keyword>
<accession>Q5JQC9</accession>
<accession>A0AV85</accession>
<accession>O60904</accession>
<accession>O95246</accession>
<accession>Q5JQD1</accession>
<accession>Q5JQD2</accession>
<accession>Q5JQD3</accession>
<organism>
    <name type="scientific">Homo sapiens</name>
    <name type="common">Human</name>
    <dbReference type="NCBI Taxonomy" id="9606"/>
    <lineage>
        <taxon>Eukaryota</taxon>
        <taxon>Metazoa</taxon>
        <taxon>Chordata</taxon>
        <taxon>Craniata</taxon>
        <taxon>Vertebrata</taxon>
        <taxon>Euteleostomi</taxon>
        <taxon>Mammalia</taxon>
        <taxon>Eutheria</taxon>
        <taxon>Euarchontoglires</taxon>
        <taxon>Primates</taxon>
        <taxon>Haplorrhini</taxon>
        <taxon>Catarrhini</taxon>
        <taxon>Hominidae</taxon>
        <taxon>Homo</taxon>
    </lineage>
</organism>